<organism>
    <name type="scientific">Drosophila melanogaster</name>
    <name type="common">Fruit fly</name>
    <dbReference type="NCBI Taxonomy" id="7227"/>
    <lineage>
        <taxon>Eukaryota</taxon>
        <taxon>Metazoa</taxon>
        <taxon>Ecdysozoa</taxon>
        <taxon>Arthropoda</taxon>
        <taxon>Hexapoda</taxon>
        <taxon>Insecta</taxon>
        <taxon>Pterygota</taxon>
        <taxon>Neoptera</taxon>
        <taxon>Endopterygota</taxon>
        <taxon>Diptera</taxon>
        <taxon>Brachycera</taxon>
        <taxon>Muscomorpha</taxon>
        <taxon>Ephydroidea</taxon>
        <taxon>Drosophilidae</taxon>
        <taxon>Drosophila</taxon>
        <taxon>Sophophora</taxon>
    </lineage>
</organism>
<gene>
    <name type="primary">sn</name>
    <name type="ORF">CG1536</name>
</gene>
<protein>
    <recommendedName>
        <fullName>Protein singed</fullName>
    </recommendedName>
</protein>
<proteinExistence type="evidence at protein level"/>
<evidence type="ECO:0000250" key="1"/>
<evidence type="ECO:0000269" key="2">
    <source>
    </source>
</evidence>
<evidence type="ECO:0000269" key="3">
    <source>
    </source>
</evidence>
<evidence type="ECO:0000305" key="4"/>
<accession>Q24524</accession>
<accession>Q9W3L8</accession>
<keyword id="KW-0009">Actin-binding</keyword>
<keyword id="KW-0963">Cytoplasm</keyword>
<keyword id="KW-0206">Cytoskeleton</keyword>
<keyword id="KW-0217">Developmental protein</keyword>
<keyword id="KW-0221">Differentiation</keyword>
<keyword id="KW-0896">Oogenesis</keyword>
<keyword id="KW-1185">Reference proteome</keyword>
<feature type="chain" id="PRO_0000219387" description="Protein singed">
    <location>
        <begin position="1"/>
        <end position="512"/>
    </location>
</feature>
<comment type="function">
    <text evidence="2 3">Acts as an actin bundling protein (PubMed:1723709, PubMed:19729655). May have a role in the asymmetric organization and/or movement of cytoplasmic components (PubMed:1723709). It has a role in somatic cells during the formation of adult bristles and hairs, and in the female germline during oogenesis (PubMed:1723709, PubMed:19729655).</text>
</comment>
<comment type="subunit">
    <text evidence="3">Interacts with Rab35, with stronger binding to the Rab35-GTP form compared to the Rab35-GDP form.</text>
</comment>
<comment type="subcellular location">
    <subcellularLocation>
        <location evidence="1">Cytoplasm</location>
        <location evidence="1">Cytoskeleton</location>
    </subcellularLocation>
</comment>
<comment type="similarity">
    <text evidence="4">Belongs to the fascin family.</text>
</comment>
<dbReference type="EMBL" id="X17549">
    <property type="protein sequence ID" value="CAA35585.1"/>
    <property type="molecule type" value="Genomic_DNA"/>
</dbReference>
<dbReference type="EMBL" id="X17550">
    <property type="protein sequence ID" value="CAA35585.1"/>
    <property type="status" value="JOINED"/>
    <property type="molecule type" value="Genomic_DNA"/>
</dbReference>
<dbReference type="EMBL" id="AE014298">
    <property type="protein sequence ID" value="AAF46307.1"/>
    <property type="molecule type" value="Genomic_DNA"/>
</dbReference>
<dbReference type="RefSeq" id="NP_001162697.1">
    <property type="nucleotide sequence ID" value="NM_001169226.2"/>
</dbReference>
<dbReference type="RefSeq" id="NP_511076.3">
    <property type="nucleotide sequence ID" value="NM_078521.3"/>
</dbReference>
<dbReference type="RefSeq" id="NP_727226.1">
    <property type="nucleotide sequence ID" value="NM_167142.3"/>
</dbReference>
<dbReference type="RefSeq" id="NP_727227.1">
    <property type="nucleotide sequence ID" value="NM_167143.3"/>
</dbReference>
<dbReference type="SMR" id="Q24524"/>
<dbReference type="BioGRID" id="58189">
    <property type="interactions" value="8"/>
</dbReference>
<dbReference type="FunCoup" id="Q24524">
    <property type="interactions" value="158"/>
</dbReference>
<dbReference type="STRING" id="7227.FBpp0071058"/>
<dbReference type="iPTMnet" id="Q24524"/>
<dbReference type="PaxDb" id="7227-FBpp0290893"/>
<dbReference type="DNASU" id="31717"/>
<dbReference type="EnsemblMetazoa" id="FBtr0071101">
    <property type="protein sequence ID" value="FBpp0071057"/>
    <property type="gene ID" value="FBgn0003447"/>
</dbReference>
<dbReference type="EnsemblMetazoa" id="FBtr0071102">
    <property type="protein sequence ID" value="FBpp0071058"/>
    <property type="gene ID" value="FBgn0003447"/>
</dbReference>
<dbReference type="EnsemblMetazoa" id="FBtr0301677">
    <property type="protein sequence ID" value="FBpp0290891"/>
    <property type="gene ID" value="FBgn0003447"/>
</dbReference>
<dbReference type="EnsemblMetazoa" id="FBtr0301679">
    <property type="protein sequence ID" value="FBpp0290893"/>
    <property type="gene ID" value="FBgn0003447"/>
</dbReference>
<dbReference type="GeneID" id="31717"/>
<dbReference type="KEGG" id="dme:Dmel_CG32858"/>
<dbReference type="UCSC" id="CG32858-RA">
    <property type="organism name" value="d. melanogaster"/>
</dbReference>
<dbReference type="AGR" id="FB:FBgn0003447"/>
<dbReference type="CTD" id="31717"/>
<dbReference type="FlyBase" id="FBgn0003447">
    <property type="gene designation" value="sn"/>
</dbReference>
<dbReference type="VEuPathDB" id="VectorBase:FBgn0003447"/>
<dbReference type="eggNOG" id="ENOG502QPRX">
    <property type="taxonomic scope" value="Eukaryota"/>
</dbReference>
<dbReference type="GeneTree" id="ENSGT00950000183157"/>
<dbReference type="HOGENOM" id="CLU_030960_2_0_1"/>
<dbReference type="InParanoid" id="Q24524"/>
<dbReference type="OMA" id="ECNKAIY"/>
<dbReference type="OrthoDB" id="10259868at2759"/>
<dbReference type="PhylomeDB" id="Q24524"/>
<dbReference type="BioGRID-ORCS" id="31717">
    <property type="hits" value="0 hits in 3 CRISPR screens"/>
</dbReference>
<dbReference type="GenomeRNAi" id="31717"/>
<dbReference type="PRO" id="PR:Q24524"/>
<dbReference type="Proteomes" id="UP000000803">
    <property type="component" value="Chromosome X"/>
</dbReference>
<dbReference type="Bgee" id="FBgn0003447">
    <property type="expression patterns" value="Expressed in compound eye cone cell in insect head and 175 other cell types or tissues"/>
</dbReference>
<dbReference type="ExpressionAtlas" id="Q24524">
    <property type="expression patterns" value="baseline and differential"/>
</dbReference>
<dbReference type="GO" id="GO:0015629">
    <property type="term" value="C:actin cytoskeleton"/>
    <property type="evidence" value="ECO:0000314"/>
    <property type="project" value="FlyBase"/>
</dbReference>
<dbReference type="GO" id="GO:0005737">
    <property type="term" value="C:cytoplasm"/>
    <property type="evidence" value="ECO:0000314"/>
    <property type="project" value="FlyBase"/>
</dbReference>
<dbReference type="GO" id="GO:0043005">
    <property type="term" value="C:neuron projection"/>
    <property type="evidence" value="ECO:0000314"/>
    <property type="project" value="FlyBase"/>
</dbReference>
<dbReference type="GO" id="GO:0043025">
    <property type="term" value="C:neuronal cell body"/>
    <property type="evidence" value="ECO:0000314"/>
    <property type="project" value="FlyBase"/>
</dbReference>
<dbReference type="GO" id="GO:0003779">
    <property type="term" value="F:actin binding"/>
    <property type="evidence" value="ECO:0000250"/>
    <property type="project" value="UniProtKB"/>
</dbReference>
<dbReference type="GO" id="GO:0051015">
    <property type="term" value="F:actin filament binding"/>
    <property type="evidence" value="ECO:0000250"/>
    <property type="project" value="UniProtKB"/>
</dbReference>
<dbReference type="GO" id="GO:0030674">
    <property type="term" value="F:protein-macromolecule adaptor activity"/>
    <property type="evidence" value="ECO:0007669"/>
    <property type="project" value="InterPro"/>
</dbReference>
<dbReference type="GO" id="GO:0030036">
    <property type="term" value="P:actin cytoskeleton organization"/>
    <property type="evidence" value="ECO:0000315"/>
    <property type="project" value="FlyBase"/>
</dbReference>
<dbReference type="GO" id="GO:0051017">
    <property type="term" value="P:actin filament bundle assembly"/>
    <property type="evidence" value="ECO:0000315"/>
    <property type="project" value="FlyBase"/>
</dbReference>
<dbReference type="GO" id="GO:0048800">
    <property type="term" value="P:antennal morphogenesis"/>
    <property type="evidence" value="ECO:0000315"/>
    <property type="project" value="FlyBase"/>
</dbReference>
<dbReference type="GO" id="GO:0016477">
    <property type="term" value="P:cell migration"/>
    <property type="evidence" value="ECO:0000318"/>
    <property type="project" value="GO_Central"/>
</dbReference>
<dbReference type="GO" id="GO:0008407">
    <property type="term" value="P:chaeta morphogenesis"/>
    <property type="evidence" value="ECO:0000315"/>
    <property type="project" value="FlyBase"/>
</dbReference>
<dbReference type="GO" id="GO:0035017">
    <property type="term" value="P:cuticle pattern formation"/>
    <property type="evidence" value="ECO:0000315"/>
    <property type="project" value="FlyBase"/>
</dbReference>
<dbReference type="GO" id="GO:0016358">
    <property type="term" value="P:dendrite development"/>
    <property type="evidence" value="ECO:0000315"/>
    <property type="project" value="FlyBase"/>
</dbReference>
<dbReference type="GO" id="GO:0009913">
    <property type="term" value="P:epidermal cell differentiation"/>
    <property type="evidence" value="ECO:0000315"/>
    <property type="project" value="FlyBase"/>
</dbReference>
<dbReference type="GO" id="GO:0007163">
    <property type="term" value="P:establishment or maintenance of cell polarity"/>
    <property type="evidence" value="ECO:0000315"/>
    <property type="project" value="FlyBase"/>
</dbReference>
<dbReference type="GO" id="GO:0046847">
    <property type="term" value="P:filopodium assembly"/>
    <property type="evidence" value="ECO:0000315"/>
    <property type="project" value="FlyBase"/>
</dbReference>
<dbReference type="GO" id="GO:0035099">
    <property type="term" value="P:hemocyte migration"/>
    <property type="evidence" value="ECO:0000315"/>
    <property type="project" value="FlyBase"/>
</dbReference>
<dbReference type="GO" id="GO:0035317">
    <property type="term" value="P:imaginal disc-derived wing hair organization"/>
    <property type="evidence" value="ECO:0000315"/>
    <property type="project" value="FlyBase"/>
</dbReference>
<dbReference type="GO" id="GO:0030034">
    <property type="term" value="P:microvillar actin bundle assembly"/>
    <property type="evidence" value="ECO:0000315"/>
    <property type="project" value="FlyBase"/>
</dbReference>
<dbReference type="GO" id="GO:0048812">
    <property type="term" value="P:neuron projection morphogenesis"/>
    <property type="evidence" value="ECO:0000315"/>
    <property type="project" value="FlyBase"/>
</dbReference>
<dbReference type="GO" id="GO:0048477">
    <property type="term" value="P:oogenesis"/>
    <property type="evidence" value="ECO:0007669"/>
    <property type="project" value="UniProtKB-KW"/>
</dbReference>
<dbReference type="GO" id="GO:0042060">
    <property type="term" value="P:wound healing"/>
    <property type="evidence" value="ECO:0000315"/>
    <property type="project" value="FlyBase"/>
</dbReference>
<dbReference type="CDD" id="cd23347">
    <property type="entry name" value="beta-trefoil_singed_rpt1"/>
    <property type="match status" value="1"/>
</dbReference>
<dbReference type="CDD" id="cd23351">
    <property type="entry name" value="beta-trefoil_singed_rpt2"/>
    <property type="match status" value="1"/>
</dbReference>
<dbReference type="CDD" id="cd23355">
    <property type="entry name" value="beta-trefoil_singed_rpt3"/>
    <property type="match status" value="1"/>
</dbReference>
<dbReference type="CDD" id="cd23359">
    <property type="entry name" value="beta-trefoil_singed_rpt4"/>
    <property type="match status" value="1"/>
</dbReference>
<dbReference type="FunFam" id="2.80.10.50:FF:000008">
    <property type="entry name" value="Fascin"/>
    <property type="match status" value="1"/>
</dbReference>
<dbReference type="FunFam" id="2.80.10.50:FF:000010">
    <property type="entry name" value="Fascin"/>
    <property type="match status" value="1"/>
</dbReference>
<dbReference type="FunFam" id="2.80.10.50:FF:000015">
    <property type="entry name" value="Fascin"/>
    <property type="match status" value="1"/>
</dbReference>
<dbReference type="FunFam" id="2.80.10.50:FF:000064">
    <property type="entry name" value="Fascin"/>
    <property type="match status" value="1"/>
</dbReference>
<dbReference type="Gene3D" id="2.80.10.50">
    <property type="match status" value="4"/>
</dbReference>
<dbReference type="InterPro" id="IPR008999">
    <property type="entry name" value="Actin-crosslinking"/>
</dbReference>
<dbReference type="InterPro" id="IPR010431">
    <property type="entry name" value="Fascin"/>
</dbReference>
<dbReference type="InterPro" id="IPR022768">
    <property type="entry name" value="Fascin-like_dom"/>
</dbReference>
<dbReference type="InterPro" id="IPR024703">
    <property type="entry name" value="Fascin_metazoans"/>
</dbReference>
<dbReference type="PANTHER" id="PTHR10551">
    <property type="entry name" value="FASCIN"/>
    <property type="match status" value="1"/>
</dbReference>
<dbReference type="PANTHER" id="PTHR10551:SF9">
    <property type="entry name" value="FASCIN-2"/>
    <property type="match status" value="1"/>
</dbReference>
<dbReference type="Pfam" id="PF06268">
    <property type="entry name" value="Fascin"/>
    <property type="match status" value="4"/>
</dbReference>
<dbReference type="PIRSF" id="PIRSF005682">
    <property type="entry name" value="Fascin"/>
    <property type="match status" value="1"/>
</dbReference>
<dbReference type="SUPFAM" id="SSF50405">
    <property type="entry name" value="Actin-crosslinking proteins"/>
    <property type="match status" value="4"/>
</dbReference>
<reference key="1">
    <citation type="journal article" date="1991" name="Genetics">
        <title>Structure and transcription of the singed locus of Drosophila melanogaster.</title>
        <authorList>
            <person name="Paterson J."/>
            <person name="O'Hare K."/>
        </authorList>
    </citation>
    <scope>NUCLEOTIDE SEQUENCE [GENOMIC DNA]</scope>
    <source>
        <strain>Canton-S</strain>
    </source>
</reference>
<reference key="2">
    <citation type="journal article" date="2000" name="Science">
        <title>The genome sequence of Drosophila melanogaster.</title>
        <authorList>
            <person name="Adams M.D."/>
            <person name="Celniker S.E."/>
            <person name="Holt R.A."/>
            <person name="Evans C.A."/>
            <person name="Gocayne J.D."/>
            <person name="Amanatides P.G."/>
            <person name="Scherer S.E."/>
            <person name="Li P.W."/>
            <person name="Hoskins R.A."/>
            <person name="Galle R.F."/>
            <person name="George R.A."/>
            <person name="Lewis S.E."/>
            <person name="Richards S."/>
            <person name="Ashburner M."/>
            <person name="Henderson S.N."/>
            <person name="Sutton G.G."/>
            <person name="Wortman J.R."/>
            <person name="Yandell M.D."/>
            <person name="Zhang Q."/>
            <person name="Chen L.X."/>
            <person name="Brandon R.C."/>
            <person name="Rogers Y.-H.C."/>
            <person name="Blazej R.G."/>
            <person name="Champe M."/>
            <person name="Pfeiffer B.D."/>
            <person name="Wan K.H."/>
            <person name="Doyle C."/>
            <person name="Baxter E.G."/>
            <person name="Helt G."/>
            <person name="Nelson C.R."/>
            <person name="Miklos G.L.G."/>
            <person name="Abril J.F."/>
            <person name="Agbayani A."/>
            <person name="An H.-J."/>
            <person name="Andrews-Pfannkoch C."/>
            <person name="Baldwin D."/>
            <person name="Ballew R.M."/>
            <person name="Basu A."/>
            <person name="Baxendale J."/>
            <person name="Bayraktaroglu L."/>
            <person name="Beasley E.M."/>
            <person name="Beeson K.Y."/>
            <person name="Benos P.V."/>
            <person name="Berman B.P."/>
            <person name="Bhandari D."/>
            <person name="Bolshakov S."/>
            <person name="Borkova D."/>
            <person name="Botchan M.R."/>
            <person name="Bouck J."/>
            <person name="Brokstein P."/>
            <person name="Brottier P."/>
            <person name="Burtis K.C."/>
            <person name="Busam D.A."/>
            <person name="Butler H."/>
            <person name="Cadieu E."/>
            <person name="Center A."/>
            <person name="Chandra I."/>
            <person name="Cherry J.M."/>
            <person name="Cawley S."/>
            <person name="Dahlke C."/>
            <person name="Davenport L.B."/>
            <person name="Davies P."/>
            <person name="de Pablos B."/>
            <person name="Delcher A."/>
            <person name="Deng Z."/>
            <person name="Mays A.D."/>
            <person name="Dew I."/>
            <person name="Dietz S.M."/>
            <person name="Dodson K."/>
            <person name="Doup L.E."/>
            <person name="Downes M."/>
            <person name="Dugan-Rocha S."/>
            <person name="Dunkov B.C."/>
            <person name="Dunn P."/>
            <person name="Durbin K.J."/>
            <person name="Evangelista C.C."/>
            <person name="Ferraz C."/>
            <person name="Ferriera S."/>
            <person name="Fleischmann W."/>
            <person name="Fosler C."/>
            <person name="Gabrielian A.E."/>
            <person name="Garg N.S."/>
            <person name="Gelbart W.M."/>
            <person name="Glasser K."/>
            <person name="Glodek A."/>
            <person name="Gong F."/>
            <person name="Gorrell J.H."/>
            <person name="Gu Z."/>
            <person name="Guan P."/>
            <person name="Harris M."/>
            <person name="Harris N.L."/>
            <person name="Harvey D.A."/>
            <person name="Heiman T.J."/>
            <person name="Hernandez J.R."/>
            <person name="Houck J."/>
            <person name="Hostin D."/>
            <person name="Houston K.A."/>
            <person name="Howland T.J."/>
            <person name="Wei M.-H."/>
            <person name="Ibegwam C."/>
            <person name="Jalali M."/>
            <person name="Kalush F."/>
            <person name="Karpen G.H."/>
            <person name="Ke Z."/>
            <person name="Kennison J.A."/>
            <person name="Ketchum K.A."/>
            <person name="Kimmel B.E."/>
            <person name="Kodira C.D."/>
            <person name="Kraft C.L."/>
            <person name="Kravitz S."/>
            <person name="Kulp D."/>
            <person name="Lai Z."/>
            <person name="Lasko P."/>
            <person name="Lei Y."/>
            <person name="Levitsky A.A."/>
            <person name="Li J.H."/>
            <person name="Li Z."/>
            <person name="Liang Y."/>
            <person name="Lin X."/>
            <person name="Liu X."/>
            <person name="Mattei B."/>
            <person name="McIntosh T.C."/>
            <person name="McLeod M.P."/>
            <person name="McPherson D."/>
            <person name="Merkulov G."/>
            <person name="Milshina N.V."/>
            <person name="Mobarry C."/>
            <person name="Morris J."/>
            <person name="Moshrefi A."/>
            <person name="Mount S.M."/>
            <person name="Moy M."/>
            <person name="Murphy B."/>
            <person name="Murphy L."/>
            <person name="Muzny D.M."/>
            <person name="Nelson D.L."/>
            <person name="Nelson D.R."/>
            <person name="Nelson K.A."/>
            <person name="Nixon K."/>
            <person name="Nusskern D.R."/>
            <person name="Pacleb J.M."/>
            <person name="Palazzolo M."/>
            <person name="Pittman G.S."/>
            <person name="Pan S."/>
            <person name="Pollard J."/>
            <person name="Puri V."/>
            <person name="Reese M.G."/>
            <person name="Reinert K."/>
            <person name="Remington K."/>
            <person name="Saunders R.D.C."/>
            <person name="Scheeler F."/>
            <person name="Shen H."/>
            <person name="Shue B.C."/>
            <person name="Siden-Kiamos I."/>
            <person name="Simpson M."/>
            <person name="Skupski M.P."/>
            <person name="Smith T.J."/>
            <person name="Spier E."/>
            <person name="Spradling A.C."/>
            <person name="Stapleton M."/>
            <person name="Strong R."/>
            <person name="Sun E."/>
            <person name="Svirskas R."/>
            <person name="Tector C."/>
            <person name="Turner R."/>
            <person name="Venter E."/>
            <person name="Wang A.H."/>
            <person name="Wang X."/>
            <person name="Wang Z.-Y."/>
            <person name="Wassarman D.A."/>
            <person name="Weinstock G.M."/>
            <person name="Weissenbach J."/>
            <person name="Williams S.M."/>
            <person name="Woodage T."/>
            <person name="Worley K.C."/>
            <person name="Wu D."/>
            <person name="Yang S."/>
            <person name="Yao Q.A."/>
            <person name="Ye J."/>
            <person name="Yeh R.-F."/>
            <person name="Zaveri J.S."/>
            <person name="Zhan M."/>
            <person name="Zhang G."/>
            <person name="Zhao Q."/>
            <person name="Zheng L."/>
            <person name="Zheng X.H."/>
            <person name="Zhong F.N."/>
            <person name="Zhong W."/>
            <person name="Zhou X."/>
            <person name="Zhu S.C."/>
            <person name="Zhu X."/>
            <person name="Smith H.O."/>
            <person name="Gibbs R.A."/>
            <person name="Myers E.W."/>
            <person name="Rubin G.M."/>
            <person name="Venter J.C."/>
        </authorList>
    </citation>
    <scope>NUCLEOTIDE SEQUENCE [LARGE SCALE GENOMIC DNA]</scope>
    <source>
        <strain>Berkeley</strain>
    </source>
</reference>
<reference key="3">
    <citation type="journal article" date="2002" name="Genome Biol.">
        <title>Annotation of the Drosophila melanogaster euchromatic genome: a systematic review.</title>
        <authorList>
            <person name="Misra S."/>
            <person name="Crosby M.A."/>
            <person name="Mungall C.J."/>
            <person name="Matthews B.B."/>
            <person name="Campbell K.S."/>
            <person name="Hradecky P."/>
            <person name="Huang Y."/>
            <person name="Kaminker J.S."/>
            <person name="Millburn G.H."/>
            <person name="Prochnik S.E."/>
            <person name="Smith C.D."/>
            <person name="Tupy J.L."/>
            <person name="Whitfield E.J."/>
            <person name="Bayraktaroglu L."/>
            <person name="Berman B.P."/>
            <person name="Bettencourt B.R."/>
            <person name="Celniker S.E."/>
            <person name="de Grey A.D.N.J."/>
            <person name="Drysdale R.A."/>
            <person name="Harris N.L."/>
            <person name="Richter J."/>
            <person name="Russo S."/>
            <person name="Schroeder A.J."/>
            <person name="Shu S.Q."/>
            <person name="Stapleton M."/>
            <person name="Yamada C."/>
            <person name="Ashburner M."/>
            <person name="Gelbart W.M."/>
            <person name="Rubin G.M."/>
            <person name="Lewis S.E."/>
        </authorList>
    </citation>
    <scope>GENOME REANNOTATION</scope>
    <source>
        <strain>Berkeley</strain>
    </source>
</reference>
<reference key="4">
    <citation type="journal article" date="2009" name="Science">
        <title>Rab35 controls actin bundling by recruiting fascin as an effector protein.</title>
        <authorList>
            <person name="Zhang J."/>
            <person name="Fonovic M."/>
            <person name="Suyama K."/>
            <person name="Bogyo M."/>
            <person name="Scott M.P."/>
        </authorList>
    </citation>
    <scope>FUNCTION</scope>
    <scope>INTERACTION WITH RAB35</scope>
</reference>
<sequence length="512" mass="57279">MNGQGCELGHSNGDIISQNQQKGWWTIGLINGQHKYMTAETFGFKLNANGASLKKKQLWTLEPSNTGESIIYLRSHLNKYLSVDQFGNVLCESDERDAGSRFQISISEDGSGRWALKNESRGYFLGGTPDKLVCTAKTPGASEFWTVHLAARPQVNLRSIGRKRFAHLSESQDEIHVDANIPWGEDTLFTLEFRAEEGGRYALHTCNNKYLNANGKLQVVCNEDCLFSAEYHGGHLALRDRQGQYLSPIGSKAVLKSRSSSVTRDELFSLEDSLPQASFIAGLNLRYVSVKQGVDVTANQDEVGENETFQLEYDWSAHRWALRTTQDRYWCLSAGGGIQATGNRRCADALFELIWHGDGSLSFRANNGKFLATKRSGHLFATSESIEEIAKFYFYLINRPILVLKCEQGFVGYRTPGNLKLECNKATYETILVERAQKGLVHLKAHSGKYWRIEGESISVDADAPSDGFFLELREPTRICIRSQQGKYLGATKNGAFKLLDDGTDSATQWEF</sequence>
<name>SING_DROME</name>